<protein>
    <recommendedName>
        <fullName evidence="2">Elongation factor Tu 1</fullName>
        <shortName evidence="2">EF-Tu 1</shortName>
        <ecNumber evidence="2">3.6.5.3</ecNumber>
    </recommendedName>
</protein>
<accession>Q6AP86</accession>
<organism>
    <name type="scientific">Desulfotalea psychrophila (strain LSv54 / DSM 12343)</name>
    <dbReference type="NCBI Taxonomy" id="177439"/>
    <lineage>
        <taxon>Bacteria</taxon>
        <taxon>Pseudomonadati</taxon>
        <taxon>Thermodesulfobacteriota</taxon>
        <taxon>Desulfobulbia</taxon>
        <taxon>Desulfobulbales</taxon>
        <taxon>Desulfocapsaceae</taxon>
        <taxon>Desulfotalea</taxon>
    </lineage>
</organism>
<keyword id="KW-0963">Cytoplasm</keyword>
<keyword id="KW-0251">Elongation factor</keyword>
<keyword id="KW-0342">GTP-binding</keyword>
<keyword id="KW-0378">Hydrolase</keyword>
<keyword id="KW-0460">Magnesium</keyword>
<keyword id="KW-0479">Metal-binding</keyword>
<keyword id="KW-0547">Nucleotide-binding</keyword>
<keyword id="KW-0648">Protein biosynthesis</keyword>
<keyword id="KW-1185">Reference proteome</keyword>
<proteinExistence type="inferred from homology"/>
<reference key="1">
    <citation type="journal article" date="2004" name="Environ. Microbiol.">
        <title>The genome of Desulfotalea psychrophila, a sulfate-reducing bacterium from permanently cold Arctic sediments.</title>
        <authorList>
            <person name="Rabus R."/>
            <person name="Ruepp A."/>
            <person name="Frickey T."/>
            <person name="Rattei T."/>
            <person name="Fartmann B."/>
            <person name="Stark M."/>
            <person name="Bauer M."/>
            <person name="Zibat A."/>
            <person name="Lombardot T."/>
            <person name="Becker I."/>
            <person name="Amann J."/>
            <person name="Gellner K."/>
            <person name="Teeling H."/>
            <person name="Leuschner W.D."/>
            <person name="Gloeckner F.-O."/>
            <person name="Lupas A.N."/>
            <person name="Amann R."/>
            <person name="Klenk H.-P."/>
        </authorList>
    </citation>
    <scope>NUCLEOTIDE SEQUENCE [LARGE SCALE GENOMIC DNA]</scope>
    <source>
        <strain>DSM 12343 / LSv54</strain>
    </source>
</reference>
<feature type="chain" id="PRO_0000337371" description="Elongation factor Tu 1">
    <location>
        <begin position="1"/>
        <end position="396"/>
    </location>
</feature>
<feature type="domain" description="tr-type G">
    <location>
        <begin position="10"/>
        <end position="206"/>
    </location>
</feature>
<feature type="region of interest" description="G1" evidence="1">
    <location>
        <begin position="19"/>
        <end position="26"/>
    </location>
</feature>
<feature type="region of interest" description="G2" evidence="1">
    <location>
        <begin position="60"/>
        <end position="64"/>
    </location>
</feature>
<feature type="region of interest" description="G3" evidence="1">
    <location>
        <begin position="81"/>
        <end position="84"/>
    </location>
</feature>
<feature type="region of interest" description="G4" evidence="1">
    <location>
        <begin position="136"/>
        <end position="139"/>
    </location>
</feature>
<feature type="region of interest" description="G5" evidence="1">
    <location>
        <begin position="174"/>
        <end position="176"/>
    </location>
</feature>
<feature type="binding site" evidence="2">
    <location>
        <begin position="19"/>
        <end position="26"/>
    </location>
    <ligand>
        <name>GTP</name>
        <dbReference type="ChEBI" id="CHEBI:37565"/>
    </ligand>
</feature>
<feature type="binding site" evidence="2">
    <location>
        <position position="26"/>
    </location>
    <ligand>
        <name>Mg(2+)</name>
        <dbReference type="ChEBI" id="CHEBI:18420"/>
    </ligand>
</feature>
<feature type="binding site" evidence="2">
    <location>
        <begin position="81"/>
        <end position="85"/>
    </location>
    <ligand>
        <name>GTP</name>
        <dbReference type="ChEBI" id="CHEBI:37565"/>
    </ligand>
</feature>
<feature type="binding site" evidence="2">
    <location>
        <begin position="136"/>
        <end position="139"/>
    </location>
    <ligand>
        <name>GTP</name>
        <dbReference type="ChEBI" id="CHEBI:37565"/>
    </ligand>
</feature>
<dbReference type="EC" id="3.6.5.3" evidence="2"/>
<dbReference type="EMBL" id="CR522870">
    <property type="protein sequence ID" value="CAG35838.1"/>
    <property type="molecule type" value="Genomic_DNA"/>
</dbReference>
<dbReference type="RefSeq" id="WP_011188352.1">
    <property type="nucleotide sequence ID" value="NC_006138.1"/>
</dbReference>
<dbReference type="SMR" id="Q6AP86"/>
<dbReference type="STRING" id="177439.DP1109"/>
<dbReference type="KEGG" id="dps:DP1109"/>
<dbReference type="eggNOG" id="COG0050">
    <property type="taxonomic scope" value="Bacteria"/>
</dbReference>
<dbReference type="HOGENOM" id="CLU_007265_0_1_7"/>
<dbReference type="OrthoDB" id="9803139at2"/>
<dbReference type="Proteomes" id="UP000000602">
    <property type="component" value="Chromosome"/>
</dbReference>
<dbReference type="GO" id="GO:0005829">
    <property type="term" value="C:cytosol"/>
    <property type="evidence" value="ECO:0007669"/>
    <property type="project" value="TreeGrafter"/>
</dbReference>
<dbReference type="GO" id="GO:0005525">
    <property type="term" value="F:GTP binding"/>
    <property type="evidence" value="ECO:0007669"/>
    <property type="project" value="UniProtKB-UniRule"/>
</dbReference>
<dbReference type="GO" id="GO:0003924">
    <property type="term" value="F:GTPase activity"/>
    <property type="evidence" value="ECO:0007669"/>
    <property type="project" value="InterPro"/>
</dbReference>
<dbReference type="GO" id="GO:0003746">
    <property type="term" value="F:translation elongation factor activity"/>
    <property type="evidence" value="ECO:0007669"/>
    <property type="project" value="UniProtKB-UniRule"/>
</dbReference>
<dbReference type="CDD" id="cd01884">
    <property type="entry name" value="EF_Tu"/>
    <property type="match status" value="1"/>
</dbReference>
<dbReference type="CDD" id="cd03697">
    <property type="entry name" value="EFTU_II"/>
    <property type="match status" value="1"/>
</dbReference>
<dbReference type="CDD" id="cd03707">
    <property type="entry name" value="EFTU_III"/>
    <property type="match status" value="1"/>
</dbReference>
<dbReference type="FunFam" id="2.40.30.10:FF:000001">
    <property type="entry name" value="Elongation factor Tu"/>
    <property type="match status" value="1"/>
</dbReference>
<dbReference type="FunFam" id="3.40.50.300:FF:000003">
    <property type="entry name" value="Elongation factor Tu"/>
    <property type="match status" value="1"/>
</dbReference>
<dbReference type="Gene3D" id="3.40.50.300">
    <property type="entry name" value="P-loop containing nucleotide triphosphate hydrolases"/>
    <property type="match status" value="1"/>
</dbReference>
<dbReference type="Gene3D" id="2.40.30.10">
    <property type="entry name" value="Translation factors"/>
    <property type="match status" value="2"/>
</dbReference>
<dbReference type="HAMAP" id="MF_00118_B">
    <property type="entry name" value="EF_Tu_B"/>
    <property type="match status" value="1"/>
</dbReference>
<dbReference type="InterPro" id="IPR041709">
    <property type="entry name" value="EF-Tu_GTP-bd"/>
</dbReference>
<dbReference type="InterPro" id="IPR050055">
    <property type="entry name" value="EF-Tu_GTPase"/>
</dbReference>
<dbReference type="InterPro" id="IPR004161">
    <property type="entry name" value="EFTu-like_2"/>
</dbReference>
<dbReference type="InterPro" id="IPR033720">
    <property type="entry name" value="EFTU_2"/>
</dbReference>
<dbReference type="InterPro" id="IPR031157">
    <property type="entry name" value="G_TR_CS"/>
</dbReference>
<dbReference type="InterPro" id="IPR027417">
    <property type="entry name" value="P-loop_NTPase"/>
</dbReference>
<dbReference type="InterPro" id="IPR005225">
    <property type="entry name" value="Small_GTP-bd"/>
</dbReference>
<dbReference type="InterPro" id="IPR000795">
    <property type="entry name" value="T_Tr_GTP-bd_dom"/>
</dbReference>
<dbReference type="InterPro" id="IPR009000">
    <property type="entry name" value="Transl_B-barrel_sf"/>
</dbReference>
<dbReference type="InterPro" id="IPR009001">
    <property type="entry name" value="Transl_elong_EF1A/Init_IF2_C"/>
</dbReference>
<dbReference type="InterPro" id="IPR004541">
    <property type="entry name" value="Transl_elong_EFTu/EF1A_bac/org"/>
</dbReference>
<dbReference type="InterPro" id="IPR004160">
    <property type="entry name" value="Transl_elong_EFTu/EF1A_C"/>
</dbReference>
<dbReference type="NCBIfam" id="TIGR00485">
    <property type="entry name" value="EF-Tu"/>
    <property type="match status" value="1"/>
</dbReference>
<dbReference type="NCBIfam" id="NF000766">
    <property type="entry name" value="PRK00049.1"/>
    <property type="match status" value="1"/>
</dbReference>
<dbReference type="NCBIfam" id="NF009372">
    <property type="entry name" value="PRK12735.1"/>
    <property type="match status" value="1"/>
</dbReference>
<dbReference type="NCBIfam" id="NF009373">
    <property type="entry name" value="PRK12736.1"/>
    <property type="match status" value="1"/>
</dbReference>
<dbReference type="NCBIfam" id="TIGR00231">
    <property type="entry name" value="small_GTP"/>
    <property type="match status" value="1"/>
</dbReference>
<dbReference type="PANTHER" id="PTHR43721:SF22">
    <property type="entry name" value="ELONGATION FACTOR TU, MITOCHONDRIAL"/>
    <property type="match status" value="1"/>
</dbReference>
<dbReference type="PANTHER" id="PTHR43721">
    <property type="entry name" value="ELONGATION FACTOR TU-RELATED"/>
    <property type="match status" value="1"/>
</dbReference>
<dbReference type="Pfam" id="PF00009">
    <property type="entry name" value="GTP_EFTU"/>
    <property type="match status" value="1"/>
</dbReference>
<dbReference type="Pfam" id="PF03144">
    <property type="entry name" value="GTP_EFTU_D2"/>
    <property type="match status" value="1"/>
</dbReference>
<dbReference type="Pfam" id="PF03143">
    <property type="entry name" value="GTP_EFTU_D3"/>
    <property type="match status" value="1"/>
</dbReference>
<dbReference type="PRINTS" id="PR00315">
    <property type="entry name" value="ELONGATNFCT"/>
</dbReference>
<dbReference type="SUPFAM" id="SSF50465">
    <property type="entry name" value="EF-Tu/eEF-1alpha/eIF2-gamma C-terminal domain"/>
    <property type="match status" value="1"/>
</dbReference>
<dbReference type="SUPFAM" id="SSF52540">
    <property type="entry name" value="P-loop containing nucleoside triphosphate hydrolases"/>
    <property type="match status" value="1"/>
</dbReference>
<dbReference type="SUPFAM" id="SSF50447">
    <property type="entry name" value="Translation proteins"/>
    <property type="match status" value="1"/>
</dbReference>
<dbReference type="PROSITE" id="PS00301">
    <property type="entry name" value="G_TR_1"/>
    <property type="match status" value="1"/>
</dbReference>
<dbReference type="PROSITE" id="PS51722">
    <property type="entry name" value="G_TR_2"/>
    <property type="match status" value="1"/>
</dbReference>
<evidence type="ECO:0000250" key="1"/>
<evidence type="ECO:0000255" key="2">
    <source>
        <dbReference type="HAMAP-Rule" id="MF_00118"/>
    </source>
</evidence>
<name>EFTU1_DESPS</name>
<gene>
    <name evidence="2" type="primary">tuf1</name>
    <name type="ordered locus">DP1109</name>
</gene>
<comment type="function">
    <text evidence="2">GTP hydrolase that promotes the GTP-dependent binding of aminoacyl-tRNA to the A-site of ribosomes during protein biosynthesis.</text>
</comment>
<comment type="catalytic activity">
    <reaction evidence="2">
        <text>GTP + H2O = GDP + phosphate + H(+)</text>
        <dbReference type="Rhea" id="RHEA:19669"/>
        <dbReference type="ChEBI" id="CHEBI:15377"/>
        <dbReference type="ChEBI" id="CHEBI:15378"/>
        <dbReference type="ChEBI" id="CHEBI:37565"/>
        <dbReference type="ChEBI" id="CHEBI:43474"/>
        <dbReference type="ChEBI" id="CHEBI:58189"/>
        <dbReference type="EC" id="3.6.5.3"/>
    </reaction>
    <physiologicalReaction direction="left-to-right" evidence="2">
        <dbReference type="Rhea" id="RHEA:19670"/>
    </physiologicalReaction>
</comment>
<comment type="subunit">
    <text evidence="2">Monomer.</text>
</comment>
<comment type="subcellular location">
    <subcellularLocation>
        <location evidence="2">Cytoplasm</location>
    </subcellularLocation>
</comment>
<comment type="similarity">
    <text evidence="2">Belongs to the TRAFAC class translation factor GTPase superfamily. Classic translation factor GTPase family. EF-Tu/EF-1A subfamily.</text>
</comment>
<sequence>MSKEKFERTKPHVNVGTIGHIDHGKTTLTAAITRVLSTKGQASFTDFSDIDKAPEEKERGITIATAHVEYETVNRHYAHVDCPGHADYIKNMITGAAQMDGAILVVAATDGAMPQTREHILLARQVGVPAMVVFLNKCDMVDDDELIELVEMELRELLDDYEFPGDDVPFIHGSALLALENPEDEDKAACIWELMDQIDSYIPEPERDVDQPFLMPVEDVFSISGRGTVATGRVERGIIKVGEEVAIVGVRDTVKTTCTGVEMFRKLLDEGRAGDNIGALLRGVKREDIERGQVLAKPGTITPHTKFKAECYILGKDEGGRHTPFFNGYRPQFYFRTTDVTGIVTLPEGIEMVMPGDNVAVEAELITPIAMDAGLRFAIREGGRTVGAGVISEIIA</sequence>